<organism>
    <name type="scientific">Staphylococcus aureus (strain Mu3 / ATCC 700698)</name>
    <dbReference type="NCBI Taxonomy" id="418127"/>
    <lineage>
        <taxon>Bacteria</taxon>
        <taxon>Bacillati</taxon>
        <taxon>Bacillota</taxon>
        <taxon>Bacilli</taxon>
        <taxon>Bacillales</taxon>
        <taxon>Staphylococcaceae</taxon>
        <taxon>Staphylococcus</taxon>
    </lineage>
</organism>
<keyword id="KW-0963">Cytoplasm</keyword>
<keyword id="KW-0408">Iron</keyword>
<keyword id="KW-0479">Metal-binding</keyword>
<keyword id="KW-0346">Stress response</keyword>
<protein>
    <recommendedName>
        <fullName evidence="1">Iron-sulfur cluster repair protein ScdA</fullName>
    </recommendedName>
</protein>
<feature type="chain" id="PRO_1000065534" description="Iron-sulfur cluster repair protein ScdA">
    <location>
        <begin position="1"/>
        <end position="224"/>
    </location>
</feature>
<reference key="1">
    <citation type="journal article" date="2008" name="Antimicrob. Agents Chemother.">
        <title>Mutated response regulator graR is responsible for phenotypic conversion of Staphylococcus aureus from heterogeneous vancomycin-intermediate resistance to vancomycin-intermediate resistance.</title>
        <authorList>
            <person name="Neoh H.-M."/>
            <person name="Cui L."/>
            <person name="Yuzawa H."/>
            <person name="Takeuchi F."/>
            <person name="Matsuo M."/>
            <person name="Hiramatsu K."/>
        </authorList>
    </citation>
    <scope>NUCLEOTIDE SEQUENCE [LARGE SCALE GENOMIC DNA]</scope>
    <source>
        <strain>Mu3 / ATCC 700698</strain>
    </source>
</reference>
<proteinExistence type="inferred from homology"/>
<comment type="function">
    <text evidence="1">Di-iron-containing protein involved in the repair of iron-sulfur clusters damaged by oxidative and nitrosative stress conditions.</text>
</comment>
<comment type="subunit">
    <text evidence="1">Homodimer.</text>
</comment>
<comment type="subcellular location">
    <subcellularLocation>
        <location evidence="1">Cytoplasm</location>
    </subcellularLocation>
</comment>
<comment type="similarity">
    <text evidence="1">Belongs to the RIC family. ScdA subfamily.</text>
</comment>
<accession>A7WXS1</accession>
<name>SCDA_STAA1</name>
<gene>
    <name evidence="1" type="primary">scdA</name>
    <name type="ordered locus">SAHV_0258</name>
</gene>
<dbReference type="EMBL" id="AP009324">
    <property type="protein sequence ID" value="BAF77141.1"/>
    <property type="molecule type" value="Genomic_DNA"/>
</dbReference>
<dbReference type="RefSeq" id="WP_000608818.1">
    <property type="nucleotide sequence ID" value="NC_009782.1"/>
</dbReference>
<dbReference type="SMR" id="A7WXS1"/>
<dbReference type="KEGG" id="saw:SAHV_0258"/>
<dbReference type="HOGENOM" id="CLU_076075_0_1_9"/>
<dbReference type="GO" id="GO:0005737">
    <property type="term" value="C:cytoplasm"/>
    <property type="evidence" value="ECO:0007669"/>
    <property type="project" value="UniProtKB-SubCell"/>
</dbReference>
<dbReference type="GO" id="GO:0046872">
    <property type="term" value="F:metal ion binding"/>
    <property type="evidence" value="ECO:0007669"/>
    <property type="project" value="UniProtKB-KW"/>
</dbReference>
<dbReference type="GO" id="GO:0030091">
    <property type="term" value="P:protein repair"/>
    <property type="evidence" value="ECO:0007669"/>
    <property type="project" value="UniProtKB-UniRule"/>
</dbReference>
<dbReference type="GO" id="GO:0051409">
    <property type="term" value="P:response to nitrosative stress"/>
    <property type="evidence" value="ECO:0007669"/>
    <property type="project" value="UniProtKB-UniRule"/>
</dbReference>
<dbReference type="GO" id="GO:0006979">
    <property type="term" value="P:response to oxidative stress"/>
    <property type="evidence" value="ECO:0007669"/>
    <property type="project" value="UniProtKB-UniRule"/>
</dbReference>
<dbReference type="FunFam" id="1.20.120.520:FF:000003">
    <property type="entry name" value="Iron-sulfur cluster repair protein ScdA"/>
    <property type="match status" value="1"/>
</dbReference>
<dbReference type="Gene3D" id="1.20.120.520">
    <property type="entry name" value="nmb1532 protein domain like"/>
    <property type="match status" value="1"/>
</dbReference>
<dbReference type="Gene3D" id="1.10.3910.10">
    <property type="entry name" value="SP0561-like"/>
    <property type="match status" value="1"/>
</dbReference>
<dbReference type="HAMAP" id="MF_01156">
    <property type="entry name" value="RIC_ScdA"/>
    <property type="match status" value="1"/>
</dbReference>
<dbReference type="InterPro" id="IPR012312">
    <property type="entry name" value="Hemerythrin-like"/>
</dbReference>
<dbReference type="InterPro" id="IPR019903">
    <property type="entry name" value="RIC_family"/>
</dbReference>
<dbReference type="InterPro" id="IPR023551">
    <property type="entry name" value="ScdA"/>
</dbReference>
<dbReference type="InterPro" id="IPR038062">
    <property type="entry name" value="ScdA-like_N_sf"/>
</dbReference>
<dbReference type="NCBIfam" id="TIGR03652">
    <property type="entry name" value="FeS_repair_RIC"/>
    <property type="match status" value="1"/>
</dbReference>
<dbReference type="NCBIfam" id="NF009777">
    <property type="entry name" value="PRK13276.1"/>
    <property type="match status" value="1"/>
</dbReference>
<dbReference type="PANTHER" id="PTHR36438">
    <property type="entry name" value="IRON-SULFUR CLUSTER REPAIR PROTEIN YTFE"/>
    <property type="match status" value="1"/>
</dbReference>
<dbReference type="PANTHER" id="PTHR36438:SF1">
    <property type="entry name" value="IRON-SULFUR CLUSTER REPAIR PROTEIN YTFE"/>
    <property type="match status" value="1"/>
</dbReference>
<dbReference type="Pfam" id="PF01814">
    <property type="entry name" value="Hemerythrin"/>
    <property type="match status" value="1"/>
</dbReference>
<dbReference type="Pfam" id="PF04405">
    <property type="entry name" value="ScdA_N"/>
    <property type="match status" value="1"/>
</dbReference>
<dbReference type="SUPFAM" id="SSF140683">
    <property type="entry name" value="SP0561-like"/>
    <property type="match status" value="1"/>
</dbReference>
<sequence length="224" mass="25468">MINKNDIVADIVIDYPKAADIFRSVGIDFCCGGQVSIEAASLEKKNVDLNELLQRLNDVEQTNTPGSLNPKFLNVSSLIQYIQAAYHEPLREEFKNLTPYVTKLSKVHGPNHPYLVELKETYDTFKSGMLEHMQKEDDVDFPKLIKYEQGEVVNDINTVIDDLVSDHIATGQLLVKMSDLTSSYEPPIEACGTWRLVYQRLKALEVLTHEHVHLENHVLFKKVS</sequence>
<evidence type="ECO:0000255" key="1">
    <source>
        <dbReference type="HAMAP-Rule" id="MF_01156"/>
    </source>
</evidence>